<gene>
    <name type="primary">IQGAP1</name>
    <name type="synonym">KIAA0051</name>
</gene>
<dbReference type="EMBL" id="L33075">
    <property type="protein sequence ID" value="AAA59187.1"/>
    <property type="molecule type" value="mRNA"/>
</dbReference>
<dbReference type="EMBL" id="D29640">
    <property type="protein sequence ID" value="BAA06123.2"/>
    <property type="status" value="ALT_INIT"/>
    <property type="molecule type" value="mRNA"/>
</dbReference>
<dbReference type="EMBL" id="CH471101">
    <property type="protein sequence ID" value="EAX02102.1"/>
    <property type="molecule type" value="Genomic_DNA"/>
</dbReference>
<dbReference type="EMBL" id="BC151834">
    <property type="protein sequence ID" value="AAI51835.1"/>
    <property type="molecule type" value="mRNA"/>
</dbReference>
<dbReference type="CCDS" id="CCDS10362.1"/>
<dbReference type="PIR" id="A54854">
    <property type="entry name" value="A54854"/>
</dbReference>
<dbReference type="RefSeq" id="NP_003861.1">
    <property type="nucleotide sequence ID" value="NM_003870.4"/>
</dbReference>
<dbReference type="PDB" id="1X0H">
    <property type="method" value="NMR"/>
    <property type="chains" value="A=1559-1657"/>
</dbReference>
<dbReference type="PDB" id="2RR8">
    <property type="method" value="NMR"/>
    <property type="chains" value="A=26-210"/>
</dbReference>
<dbReference type="PDB" id="3FAY">
    <property type="method" value="X-ray"/>
    <property type="resolution" value="2.20 A"/>
    <property type="chains" value="A=962-1345"/>
</dbReference>
<dbReference type="PDB" id="3I6X">
    <property type="method" value="X-ray"/>
    <property type="resolution" value="2.50 A"/>
    <property type="chains" value="A/B/C/D=1-191"/>
</dbReference>
<dbReference type="PDB" id="5L0O">
    <property type="method" value="X-ray"/>
    <property type="resolution" value="2.36 A"/>
    <property type="chains" value="A/B/C/D=1-191"/>
</dbReference>
<dbReference type="PDBsum" id="1X0H"/>
<dbReference type="PDBsum" id="2RR8"/>
<dbReference type="PDBsum" id="3FAY"/>
<dbReference type="PDBsum" id="3I6X"/>
<dbReference type="PDBsum" id="5L0O"/>
<dbReference type="BMRB" id="P46940"/>
<dbReference type="SMR" id="P46940"/>
<dbReference type="BioGRID" id="114353">
    <property type="interactions" value="582"/>
</dbReference>
<dbReference type="CORUM" id="P46940"/>
<dbReference type="DIP" id="DIP-32597N"/>
<dbReference type="FunCoup" id="P46940">
    <property type="interactions" value="856"/>
</dbReference>
<dbReference type="IntAct" id="P46940">
    <property type="interactions" value="275"/>
</dbReference>
<dbReference type="MINT" id="P46940"/>
<dbReference type="STRING" id="9606.ENSP00000268182"/>
<dbReference type="ChEMBL" id="CHEMBL4295763"/>
<dbReference type="DrugBank" id="DB11638">
    <property type="generic name" value="Artenimol"/>
</dbReference>
<dbReference type="CarbonylDB" id="P46940"/>
<dbReference type="GlyCosmos" id="P46940">
    <property type="glycosylation" value="2 sites, 2 glycans"/>
</dbReference>
<dbReference type="GlyGen" id="P46940">
    <property type="glycosylation" value="4 sites, 2 N-linked glycans (2 sites), 2 O-linked glycans (2 sites)"/>
</dbReference>
<dbReference type="iPTMnet" id="P46940"/>
<dbReference type="MetOSite" id="P46940"/>
<dbReference type="PhosphoSitePlus" id="P46940"/>
<dbReference type="SwissPalm" id="P46940"/>
<dbReference type="BioMuta" id="IQGAP1"/>
<dbReference type="DMDM" id="1170586"/>
<dbReference type="jPOST" id="P46940"/>
<dbReference type="MassIVE" id="P46940"/>
<dbReference type="PaxDb" id="9606-ENSP00000268182"/>
<dbReference type="PeptideAtlas" id="P46940"/>
<dbReference type="PRIDE" id="P46940"/>
<dbReference type="ProteomicsDB" id="55776"/>
<dbReference type="Pumba" id="P46940"/>
<dbReference type="Antibodypedia" id="2891">
    <property type="antibodies" value="432 antibodies from 40 providers"/>
</dbReference>
<dbReference type="DNASU" id="8826"/>
<dbReference type="Ensembl" id="ENST00000268182.10">
    <property type="protein sequence ID" value="ENSP00000268182.5"/>
    <property type="gene ID" value="ENSG00000140575.13"/>
</dbReference>
<dbReference type="GeneID" id="8826"/>
<dbReference type="KEGG" id="hsa:8826"/>
<dbReference type="MANE-Select" id="ENST00000268182.10">
    <property type="protein sequence ID" value="ENSP00000268182.5"/>
    <property type="RefSeq nucleotide sequence ID" value="NM_003870.4"/>
    <property type="RefSeq protein sequence ID" value="NP_003861.1"/>
</dbReference>
<dbReference type="UCSC" id="uc002bpl.2">
    <property type="organism name" value="human"/>
</dbReference>
<dbReference type="AGR" id="HGNC:6110"/>
<dbReference type="CTD" id="8826"/>
<dbReference type="DisGeNET" id="8826"/>
<dbReference type="GeneCards" id="IQGAP1"/>
<dbReference type="HGNC" id="HGNC:6110">
    <property type="gene designation" value="IQGAP1"/>
</dbReference>
<dbReference type="HPA" id="ENSG00000140575">
    <property type="expression patterns" value="Low tissue specificity"/>
</dbReference>
<dbReference type="MIM" id="603379">
    <property type="type" value="gene"/>
</dbReference>
<dbReference type="neXtProt" id="NX_P46940"/>
<dbReference type="OpenTargets" id="ENSG00000140575"/>
<dbReference type="PharmGKB" id="PA29910"/>
<dbReference type="VEuPathDB" id="HostDB:ENSG00000140575"/>
<dbReference type="eggNOG" id="KOG2128">
    <property type="taxonomic scope" value="Eukaryota"/>
</dbReference>
<dbReference type="GeneTree" id="ENSGT00950000183076"/>
<dbReference type="HOGENOM" id="CLU_000972_2_1_1"/>
<dbReference type="InParanoid" id="P46940"/>
<dbReference type="OMA" id="KGVLVHW"/>
<dbReference type="OrthoDB" id="775356at2759"/>
<dbReference type="PAN-GO" id="P46940">
    <property type="GO annotations" value="6 GO annotations based on evolutionary models"/>
</dbReference>
<dbReference type="PhylomeDB" id="P46940"/>
<dbReference type="TreeFam" id="TF313078"/>
<dbReference type="PathwayCommons" id="P46940"/>
<dbReference type="Reactome" id="R-HSA-373753">
    <property type="pathway name" value="Nephrin family interactions"/>
</dbReference>
<dbReference type="Reactome" id="R-HSA-381676">
    <property type="pathway name" value="Glucagon-like Peptide-1 (GLP1) regulates insulin secretion"/>
</dbReference>
<dbReference type="Reactome" id="R-HSA-5626467">
    <property type="pathway name" value="RHO GTPases activate IQGAPs"/>
</dbReference>
<dbReference type="Reactome" id="R-HSA-5674135">
    <property type="pathway name" value="MAP2K and MAPK activation"/>
</dbReference>
<dbReference type="Reactome" id="R-HSA-6798695">
    <property type="pathway name" value="Neutrophil degranulation"/>
</dbReference>
<dbReference type="Reactome" id="R-HSA-6802946">
    <property type="pathway name" value="Signaling by moderate kinase activity BRAF mutants"/>
</dbReference>
<dbReference type="Reactome" id="R-HSA-6802948">
    <property type="pathway name" value="Signaling by high-kinase activity BRAF mutants"/>
</dbReference>
<dbReference type="Reactome" id="R-HSA-6802952">
    <property type="pathway name" value="Signaling by BRAF and RAF1 fusions"/>
</dbReference>
<dbReference type="Reactome" id="R-HSA-6802955">
    <property type="pathway name" value="Paradoxical activation of RAF signaling by kinase inactive BRAF"/>
</dbReference>
<dbReference type="Reactome" id="R-HSA-8980692">
    <property type="pathway name" value="RHOA GTPase cycle"/>
</dbReference>
<dbReference type="Reactome" id="R-HSA-9013106">
    <property type="pathway name" value="RHOC GTPase cycle"/>
</dbReference>
<dbReference type="Reactome" id="R-HSA-9013148">
    <property type="pathway name" value="CDC42 GTPase cycle"/>
</dbReference>
<dbReference type="Reactome" id="R-HSA-9013149">
    <property type="pathway name" value="RAC1 GTPase cycle"/>
</dbReference>
<dbReference type="Reactome" id="R-HSA-9013404">
    <property type="pathway name" value="RAC2 GTPase cycle"/>
</dbReference>
<dbReference type="Reactome" id="R-HSA-9013406">
    <property type="pathway name" value="RHOQ GTPase cycle"/>
</dbReference>
<dbReference type="Reactome" id="R-HSA-9013420">
    <property type="pathway name" value="RHOU GTPase cycle"/>
</dbReference>
<dbReference type="Reactome" id="R-HSA-9013424">
    <property type="pathway name" value="RHOV GTPase cycle"/>
</dbReference>
<dbReference type="Reactome" id="R-HSA-9649948">
    <property type="pathway name" value="Signaling downstream of RAS mutants"/>
</dbReference>
<dbReference type="Reactome" id="R-HSA-9656223">
    <property type="pathway name" value="Signaling by RAF1 mutants"/>
</dbReference>
<dbReference type="SignaLink" id="P46940"/>
<dbReference type="SIGNOR" id="P46940"/>
<dbReference type="BioGRID-ORCS" id="8826">
    <property type="hits" value="19 hits in 1164 CRISPR screens"/>
</dbReference>
<dbReference type="CD-CODE" id="FB4E32DD">
    <property type="entry name" value="Presynaptic clusters and postsynaptic densities"/>
</dbReference>
<dbReference type="ChiTaRS" id="IQGAP1">
    <property type="organism name" value="human"/>
</dbReference>
<dbReference type="EvolutionaryTrace" id="P46940"/>
<dbReference type="GeneWiki" id="IQGAP1"/>
<dbReference type="GenomeRNAi" id="8826"/>
<dbReference type="Pharos" id="P46940">
    <property type="development level" value="Tbio"/>
</dbReference>
<dbReference type="PRO" id="PR:P46940"/>
<dbReference type="Proteomes" id="UP000005640">
    <property type="component" value="Chromosome 15"/>
</dbReference>
<dbReference type="RNAct" id="P46940">
    <property type="molecule type" value="protein"/>
</dbReference>
<dbReference type="Bgee" id="ENSG00000140575">
    <property type="expression patterns" value="Expressed in calcaneal tendon and 210 other cell types or tissues"/>
</dbReference>
<dbReference type="ExpressionAtlas" id="P46940">
    <property type="expression patterns" value="baseline and differential"/>
</dbReference>
<dbReference type="GO" id="GO:0005884">
    <property type="term" value="C:actin filament"/>
    <property type="evidence" value="ECO:0000304"/>
    <property type="project" value="ProtInc"/>
</dbReference>
<dbReference type="GO" id="GO:0016324">
    <property type="term" value="C:apical plasma membrane"/>
    <property type="evidence" value="ECO:0000314"/>
    <property type="project" value="UniProtKB"/>
</dbReference>
<dbReference type="GO" id="GO:0030424">
    <property type="term" value="C:axon"/>
    <property type="evidence" value="ECO:0000250"/>
    <property type="project" value="UniProtKB"/>
</dbReference>
<dbReference type="GO" id="GO:0016323">
    <property type="term" value="C:basolateral plasma membrane"/>
    <property type="evidence" value="ECO:0007669"/>
    <property type="project" value="UniProtKB-SubCell"/>
</dbReference>
<dbReference type="GO" id="GO:0005938">
    <property type="term" value="C:cell cortex"/>
    <property type="evidence" value="ECO:0000318"/>
    <property type="project" value="GO_Central"/>
</dbReference>
<dbReference type="GO" id="GO:0030864">
    <property type="term" value="C:cortical actin cytoskeleton"/>
    <property type="evidence" value="ECO:0007669"/>
    <property type="project" value="Ensembl"/>
</dbReference>
<dbReference type="GO" id="GO:0005737">
    <property type="term" value="C:cytoplasm"/>
    <property type="evidence" value="ECO:0000314"/>
    <property type="project" value="UniProtKB"/>
</dbReference>
<dbReference type="GO" id="GO:0036464">
    <property type="term" value="C:cytoplasmic ribonucleoprotein granule"/>
    <property type="evidence" value="ECO:0000314"/>
    <property type="project" value="ParkinsonsUK-UCL"/>
</dbReference>
<dbReference type="GO" id="GO:0009898">
    <property type="term" value="C:cytoplasmic side of plasma membrane"/>
    <property type="evidence" value="ECO:0000314"/>
    <property type="project" value="UniProtKB"/>
</dbReference>
<dbReference type="GO" id="GO:0005829">
    <property type="term" value="C:cytosol"/>
    <property type="evidence" value="ECO:0000304"/>
    <property type="project" value="Reactome"/>
</dbReference>
<dbReference type="GO" id="GO:0070062">
    <property type="term" value="C:extracellular exosome"/>
    <property type="evidence" value="ECO:0007005"/>
    <property type="project" value="UniProtKB"/>
</dbReference>
<dbReference type="GO" id="GO:0005925">
    <property type="term" value="C:focal adhesion"/>
    <property type="evidence" value="ECO:0007005"/>
    <property type="project" value="UniProtKB"/>
</dbReference>
<dbReference type="GO" id="GO:0030426">
    <property type="term" value="C:growth cone"/>
    <property type="evidence" value="ECO:0000250"/>
    <property type="project" value="UniProtKB"/>
</dbReference>
<dbReference type="GO" id="GO:0016328">
    <property type="term" value="C:lateral plasma membrane"/>
    <property type="evidence" value="ECO:0007669"/>
    <property type="project" value="Ensembl"/>
</dbReference>
<dbReference type="GO" id="GO:0005874">
    <property type="term" value="C:microtubule"/>
    <property type="evidence" value="ECO:0000314"/>
    <property type="project" value="UniProtKB"/>
</dbReference>
<dbReference type="GO" id="GO:0030496">
    <property type="term" value="C:midbody"/>
    <property type="evidence" value="ECO:0000314"/>
    <property type="project" value="UniProtKB"/>
</dbReference>
<dbReference type="GO" id="GO:0043005">
    <property type="term" value="C:neuron projection"/>
    <property type="evidence" value="ECO:0000250"/>
    <property type="project" value="UniProtKB"/>
</dbReference>
<dbReference type="GO" id="GO:0005634">
    <property type="term" value="C:nucleus"/>
    <property type="evidence" value="ECO:0000314"/>
    <property type="project" value="UniProtKB"/>
</dbReference>
<dbReference type="GO" id="GO:0005886">
    <property type="term" value="C:plasma membrane"/>
    <property type="evidence" value="ECO:0000314"/>
    <property type="project" value="UniProtKB"/>
</dbReference>
<dbReference type="GO" id="GO:1990904">
    <property type="term" value="C:ribonucleoprotein complex"/>
    <property type="evidence" value="ECO:0007669"/>
    <property type="project" value="Ensembl"/>
</dbReference>
<dbReference type="GO" id="GO:0001726">
    <property type="term" value="C:ruffle"/>
    <property type="evidence" value="ECO:0000314"/>
    <property type="project" value="UniProtKB"/>
</dbReference>
<dbReference type="GO" id="GO:0030667">
    <property type="term" value="C:secretory granule membrane"/>
    <property type="evidence" value="ECO:0000304"/>
    <property type="project" value="Reactome"/>
</dbReference>
<dbReference type="GO" id="GO:0036057">
    <property type="term" value="C:slit diaphragm"/>
    <property type="evidence" value="ECO:0000250"/>
    <property type="project" value="UniProtKB"/>
</dbReference>
<dbReference type="GO" id="GO:0051015">
    <property type="term" value="F:actin filament binding"/>
    <property type="evidence" value="ECO:0000318"/>
    <property type="project" value="GO_Central"/>
</dbReference>
<dbReference type="GO" id="GO:0045296">
    <property type="term" value="F:cadherin binding"/>
    <property type="evidence" value="ECO:0007005"/>
    <property type="project" value="BHF-UCL"/>
</dbReference>
<dbReference type="GO" id="GO:0005509">
    <property type="term" value="F:calcium ion binding"/>
    <property type="evidence" value="ECO:0000314"/>
    <property type="project" value="BHF-UCL"/>
</dbReference>
<dbReference type="GO" id="GO:0005516">
    <property type="term" value="F:calmodulin binding"/>
    <property type="evidence" value="ECO:0000314"/>
    <property type="project" value="BHF-UCL"/>
</dbReference>
<dbReference type="GO" id="GO:0005096">
    <property type="term" value="F:GTPase activator activity"/>
    <property type="evidence" value="ECO:0000318"/>
    <property type="project" value="GO_Central"/>
</dbReference>
<dbReference type="GO" id="GO:0005095">
    <property type="term" value="F:GTPase inhibitor activity"/>
    <property type="evidence" value="ECO:0000304"/>
    <property type="project" value="ProtInc"/>
</dbReference>
<dbReference type="GO" id="GO:0005078">
    <property type="term" value="F:MAP-kinase scaffold activity"/>
    <property type="evidence" value="ECO:0000353"/>
    <property type="project" value="BHF-UCL"/>
</dbReference>
<dbReference type="GO" id="GO:0060090">
    <property type="term" value="F:molecular adaptor activity"/>
    <property type="evidence" value="ECO:0000314"/>
    <property type="project" value="ARUK-UCL"/>
</dbReference>
<dbReference type="GO" id="GO:0005547">
    <property type="term" value="F:phosphatidylinositol-3,4,5-trisphosphate binding"/>
    <property type="evidence" value="ECO:0000314"/>
    <property type="project" value="UniProtKB"/>
</dbReference>
<dbReference type="GO" id="GO:0019904">
    <property type="term" value="F:protein domain specific binding"/>
    <property type="evidence" value="ECO:0000353"/>
    <property type="project" value="UniProtKB"/>
</dbReference>
<dbReference type="GO" id="GO:0019901">
    <property type="term" value="F:protein kinase binding"/>
    <property type="evidence" value="ECO:0000353"/>
    <property type="project" value="BHF-UCL"/>
</dbReference>
<dbReference type="GO" id="GO:0019903">
    <property type="term" value="F:protein phosphatase binding"/>
    <property type="evidence" value="ECO:0000353"/>
    <property type="project" value="UniProtKB"/>
</dbReference>
<dbReference type="GO" id="GO:0043539">
    <property type="term" value="F:protein serine/threonine kinase activator activity"/>
    <property type="evidence" value="ECO:0000314"/>
    <property type="project" value="BHF-UCL"/>
</dbReference>
<dbReference type="GO" id="GO:0044548">
    <property type="term" value="F:S100 protein binding"/>
    <property type="evidence" value="ECO:0000353"/>
    <property type="project" value="UniProtKB"/>
</dbReference>
<dbReference type="GO" id="GO:0031267">
    <property type="term" value="F:small GTPase binding"/>
    <property type="evidence" value="ECO:0000353"/>
    <property type="project" value="ARUK-UCL"/>
</dbReference>
<dbReference type="GO" id="GO:0070836">
    <property type="term" value="P:caveola assembly"/>
    <property type="evidence" value="ECO:0007669"/>
    <property type="project" value="Ensembl"/>
</dbReference>
<dbReference type="GO" id="GO:0016477">
    <property type="term" value="P:cell migration"/>
    <property type="evidence" value="ECO:0000315"/>
    <property type="project" value="ARUK-UCL"/>
</dbReference>
<dbReference type="GO" id="GO:0071277">
    <property type="term" value="P:cellular response to calcium ion"/>
    <property type="evidence" value="ECO:0000314"/>
    <property type="project" value="BHF-UCL"/>
</dbReference>
<dbReference type="GO" id="GO:0071364">
    <property type="term" value="P:cellular response to epidermal growth factor stimulus"/>
    <property type="evidence" value="ECO:0000315"/>
    <property type="project" value="BHF-UCL"/>
</dbReference>
<dbReference type="GO" id="GO:0036120">
    <property type="term" value="P:cellular response to platelet-derived growth factor stimulus"/>
    <property type="evidence" value="ECO:0007669"/>
    <property type="project" value="Ensembl"/>
</dbReference>
<dbReference type="GO" id="GO:0007173">
    <property type="term" value="P:epidermal growth factor receptor signaling pathway"/>
    <property type="evidence" value="ECO:0000315"/>
    <property type="project" value="BHF-UCL"/>
</dbReference>
<dbReference type="GO" id="GO:0008543">
    <property type="term" value="P:fibroblast growth factor receptor signaling pathway"/>
    <property type="evidence" value="ECO:0007669"/>
    <property type="project" value="Ensembl"/>
</dbReference>
<dbReference type="GO" id="GO:0010761">
    <property type="term" value="P:fibroblast migration"/>
    <property type="evidence" value="ECO:0000318"/>
    <property type="project" value="GO_Central"/>
</dbReference>
<dbReference type="GO" id="GO:1903479">
    <property type="term" value="P:mitotic actomyosin contractile ring assembly actin filament organization"/>
    <property type="evidence" value="ECO:0000318"/>
    <property type="project" value="GO_Central"/>
</dbReference>
<dbReference type="GO" id="GO:0035305">
    <property type="term" value="P:negative regulation of dephosphorylation"/>
    <property type="evidence" value="ECO:0007669"/>
    <property type="project" value="Ensembl"/>
</dbReference>
<dbReference type="GO" id="GO:1990138">
    <property type="term" value="P:neuron projection extension"/>
    <property type="evidence" value="ECO:0000315"/>
    <property type="project" value="UniProtKB"/>
</dbReference>
<dbReference type="GO" id="GO:0048008">
    <property type="term" value="P:platelet-derived growth factor receptor signaling pathway"/>
    <property type="evidence" value="ECO:0007669"/>
    <property type="project" value="Ensembl"/>
</dbReference>
<dbReference type="GO" id="GO:0072015">
    <property type="term" value="P:podocyte development"/>
    <property type="evidence" value="ECO:0000250"/>
    <property type="project" value="UniProtKB"/>
</dbReference>
<dbReference type="GO" id="GO:0043410">
    <property type="term" value="P:positive regulation of MAPK cascade"/>
    <property type="evidence" value="ECO:0000315"/>
    <property type="project" value="BHF-UCL"/>
</dbReference>
<dbReference type="GO" id="GO:0001817">
    <property type="term" value="P:regulation of cytokine production"/>
    <property type="evidence" value="ECO:0007669"/>
    <property type="project" value="Ensembl"/>
</dbReference>
<dbReference type="GO" id="GO:0007346">
    <property type="term" value="P:regulation of mitotic cell cycle"/>
    <property type="evidence" value="ECO:0000315"/>
    <property type="project" value="UniProtKB"/>
</dbReference>
<dbReference type="GO" id="GO:0007165">
    <property type="term" value="P:signal transduction"/>
    <property type="evidence" value="ECO:0000304"/>
    <property type="project" value="ProtInc"/>
</dbReference>
<dbReference type="CDD" id="cd21274">
    <property type="entry name" value="CH_IQGAP1"/>
    <property type="match status" value="1"/>
</dbReference>
<dbReference type="CDD" id="cd05133">
    <property type="entry name" value="RasGAP_IQGAP1"/>
    <property type="match status" value="1"/>
</dbReference>
<dbReference type="CDD" id="cd00201">
    <property type="entry name" value="WW"/>
    <property type="match status" value="1"/>
</dbReference>
<dbReference type="FunFam" id="1.10.418.10:FF:000013">
    <property type="entry name" value="IQ motif containing GTPase activating protein 1"/>
    <property type="match status" value="1"/>
</dbReference>
<dbReference type="FunFam" id="1.10.506.10:FF:000004">
    <property type="entry name" value="IQ motif containing GTPase activating protein 1"/>
    <property type="match status" value="1"/>
</dbReference>
<dbReference type="FunFam" id="1.20.5.190:FF:000005">
    <property type="entry name" value="IQ motif containing GTPase activating protein 1"/>
    <property type="match status" value="1"/>
</dbReference>
<dbReference type="FunFam" id="2.20.70.10:FF:000062">
    <property type="entry name" value="IQ motif containing GTPase activating protein 1"/>
    <property type="match status" value="1"/>
</dbReference>
<dbReference type="FunFam" id="4.10.270.10:FF:000003">
    <property type="entry name" value="IQ motif containing GTPase activating protein 1"/>
    <property type="match status" value="1"/>
</dbReference>
<dbReference type="Gene3D" id="1.20.5.190">
    <property type="match status" value="1"/>
</dbReference>
<dbReference type="Gene3D" id="2.20.70.10">
    <property type="match status" value="1"/>
</dbReference>
<dbReference type="Gene3D" id="1.10.418.10">
    <property type="entry name" value="Calponin-like domain"/>
    <property type="match status" value="1"/>
</dbReference>
<dbReference type="Gene3D" id="1.10.506.10">
    <property type="entry name" value="GTPase Activation - p120gap, domain 1"/>
    <property type="match status" value="1"/>
</dbReference>
<dbReference type="Gene3D" id="4.10.270.10">
    <property type="entry name" value="Myosin, subunit A"/>
    <property type="match status" value="1"/>
</dbReference>
<dbReference type="InterPro" id="IPR001715">
    <property type="entry name" value="CH_dom"/>
</dbReference>
<dbReference type="InterPro" id="IPR036872">
    <property type="entry name" value="CH_dom_sf"/>
</dbReference>
<dbReference type="InterPro" id="IPR000048">
    <property type="entry name" value="IQ_motif_EF-hand-BS"/>
</dbReference>
<dbReference type="InterPro" id="IPR027417">
    <property type="entry name" value="P-loop_NTPase"/>
</dbReference>
<dbReference type="InterPro" id="IPR000593">
    <property type="entry name" value="RasGAP_C"/>
</dbReference>
<dbReference type="InterPro" id="IPR023152">
    <property type="entry name" value="RasGAP_CS"/>
</dbReference>
<dbReference type="InterPro" id="IPR001936">
    <property type="entry name" value="RasGAP_dom"/>
</dbReference>
<dbReference type="InterPro" id="IPR008936">
    <property type="entry name" value="Rho_GTPase_activation_prot"/>
</dbReference>
<dbReference type="InterPro" id="IPR001202">
    <property type="entry name" value="WW_dom"/>
</dbReference>
<dbReference type="PANTHER" id="PTHR14149">
    <property type="entry name" value="RAS GTPASE-ACTIVATING PROTEIN WITH IQ MOTIF"/>
    <property type="match status" value="1"/>
</dbReference>
<dbReference type="PANTHER" id="PTHR14149:SF15">
    <property type="entry name" value="RAS GTPASE-ACTIVATING-LIKE PROTEIN IQGAP1"/>
    <property type="match status" value="1"/>
</dbReference>
<dbReference type="Pfam" id="PF00307">
    <property type="entry name" value="CH"/>
    <property type="match status" value="1"/>
</dbReference>
<dbReference type="Pfam" id="PF00612">
    <property type="entry name" value="IQ"/>
    <property type="match status" value="4"/>
</dbReference>
<dbReference type="Pfam" id="PF00616">
    <property type="entry name" value="RasGAP"/>
    <property type="match status" value="1"/>
</dbReference>
<dbReference type="Pfam" id="PF03836">
    <property type="entry name" value="RasGAP_C"/>
    <property type="match status" value="1"/>
</dbReference>
<dbReference type="SMART" id="SM00033">
    <property type="entry name" value="CH"/>
    <property type="match status" value="1"/>
</dbReference>
<dbReference type="SMART" id="SM00015">
    <property type="entry name" value="IQ"/>
    <property type="match status" value="4"/>
</dbReference>
<dbReference type="SMART" id="SM00323">
    <property type="entry name" value="RasGAP"/>
    <property type="match status" value="1"/>
</dbReference>
<dbReference type="SMART" id="SM00456">
    <property type="entry name" value="WW"/>
    <property type="match status" value="1"/>
</dbReference>
<dbReference type="SUPFAM" id="SSF47576">
    <property type="entry name" value="Calponin-homology domain, CH-domain"/>
    <property type="match status" value="1"/>
</dbReference>
<dbReference type="SUPFAM" id="SSF48350">
    <property type="entry name" value="GTPase activation domain, GAP"/>
    <property type="match status" value="1"/>
</dbReference>
<dbReference type="SUPFAM" id="SSF52540">
    <property type="entry name" value="P-loop containing nucleoside triphosphate hydrolases"/>
    <property type="match status" value="1"/>
</dbReference>
<dbReference type="SUPFAM" id="SSF143885">
    <property type="entry name" value="RGC domain-like"/>
    <property type="match status" value="1"/>
</dbReference>
<dbReference type="PROSITE" id="PS50021">
    <property type="entry name" value="CH"/>
    <property type="match status" value="1"/>
</dbReference>
<dbReference type="PROSITE" id="PS50096">
    <property type="entry name" value="IQ"/>
    <property type="match status" value="4"/>
</dbReference>
<dbReference type="PROSITE" id="PS00509">
    <property type="entry name" value="RAS_GTPASE_ACTIV_1"/>
    <property type="match status" value="1"/>
</dbReference>
<dbReference type="PROSITE" id="PS50018">
    <property type="entry name" value="RAS_GTPASE_ACTIV_2"/>
    <property type="match status" value="1"/>
</dbReference>
<dbReference type="PROSITE" id="PS01159">
    <property type="entry name" value="WW_DOMAIN_1"/>
    <property type="match status" value="1"/>
</dbReference>
<dbReference type="PROSITE" id="PS50020">
    <property type="entry name" value="WW_DOMAIN_2"/>
    <property type="match status" value="1"/>
</dbReference>
<organism>
    <name type="scientific">Homo sapiens</name>
    <name type="common">Human</name>
    <dbReference type="NCBI Taxonomy" id="9606"/>
    <lineage>
        <taxon>Eukaryota</taxon>
        <taxon>Metazoa</taxon>
        <taxon>Chordata</taxon>
        <taxon>Craniata</taxon>
        <taxon>Vertebrata</taxon>
        <taxon>Euteleostomi</taxon>
        <taxon>Mammalia</taxon>
        <taxon>Eutheria</taxon>
        <taxon>Euarchontoglires</taxon>
        <taxon>Primates</taxon>
        <taxon>Haplorrhini</taxon>
        <taxon>Catarrhini</taxon>
        <taxon>Hominidae</taxon>
        <taxon>Homo</taxon>
    </lineage>
</organism>
<feature type="initiator methionine" description="Removed" evidence="19 24 25 26 28">
    <location>
        <position position="1"/>
    </location>
</feature>
<feature type="chain" id="PRO_0000056648" description="Ras GTPase-activating-like protein IQGAP1">
    <location>
        <begin position="2"/>
        <end position="1657"/>
    </location>
</feature>
<feature type="domain" description="Calponin-homology (CH)" evidence="2">
    <location>
        <begin position="44"/>
        <end position="159"/>
    </location>
</feature>
<feature type="domain" description="WW" evidence="5">
    <location>
        <begin position="679"/>
        <end position="712"/>
    </location>
</feature>
<feature type="domain" description="IQ 1" evidence="3">
    <location>
        <begin position="745"/>
        <end position="774"/>
    </location>
</feature>
<feature type="domain" description="IQ 2" evidence="3">
    <location>
        <begin position="775"/>
        <end position="804"/>
    </location>
</feature>
<feature type="domain" description="IQ 3" evidence="3">
    <location>
        <begin position="805"/>
        <end position="834"/>
    </location>
</feature>
<feature type="domain" description="IQ 4" evidence="3">
    <location>
        <begin position="835"/>
        <end position="864"/>
    </location>
</feature>
<feature type="domain" description="Ras-GAP" evidence="4">
    <location>
        <begin position="1020"/>
        <end position="1269"/>
    </location>
</feature>
<feature type="region of interest" description="C1">
    <location>
        <begin position="956"/>
        <end position="1274"/>
    </location>
</feature>
<feature type="region of interest" description="C2">
    <location>
        <begin position="1276"/>
        <end position="1657"/>
    </location>
</feature>
<feature type="region of interest" description="Disordered" evidence="6">
    <location>
        <begin position="1410"/>
        <end position="1448"/>
    </location>
</feature>
<feature type="compositionally biased region" description="Basic and acidic residues" evidence="6">
    <location>
        <begin position="1417"/>
        <end position="1448"/>
    </location>
</feature>
<feature type="modified residue" description="N-acetylserine" evidence="19 24 25 26 28">
    <location>
        <position position="2"/>
    </location>
</feature>
<feature type="modified residue" description="Phosphoserine" evidence="22 24 27">
    <location>
        <position position="2"/>
    </location>
</feature>
<feature type="modified residue" description="Phosphotyrosine" evidence="1">
    <location>
        <position position="172"/>
    </location>
</feature>
<feature type="modified residue" description="Phosphoserine" evidence="24 27">
    <location>
        <position position="330"/>
    </location>
</feature>
<feature type="modified residue" description="Phosphoserine; by PKC" evidence="21">
    <location>
        <position position="1441"/>
    </location>
</feature>
<feature type="modified residue" description="Phosphoserine; by PKC/PRKCE" evidence="7 8 23 24 27">
    <location>
        <position position="1443"/>
    </location>
</feature>
<feature type="sequence variant" id="VAR_049134" description="In dbSNP:rs12324924.">
    <original>S</original>
    <variation>A</variation>
    <location>
        <position position="256"/>
    </location>
</feature>
<feature type="mutagenesis site" description="Abolishes neurite outgrowth promoting activity; when associated with A-1443." evidence="8">
    <original>S</original>
    <variation>A</variation>
    <location>
        <position position="1441"/>
    </location>
</feature>
<feature type="mutagenesis site" description="Strongly enhances neurite outgrowth promoting activity; when associated with A-1443." evidence="8">
    <original>S</original>
    <variation>E</variation>
    <location>
        <position position="1441"/>
    </location>
</feature>
<feature type="mutagenesis site" description="Abolishes neurite outgrowth promoting activity; when associated with A-1441." evidence="8">
    <original>S</original>
    <variation>A</variation>
    <location>
        <position position="1443"/>
    </location>
</feature>
<feature type="mutagenesis site" description="Strongly enhances neurite outgrowth promoting activity; when associated with A-1441." evidence="8">
    <original>S</original>
    <variation>D</variation>
    <location>
        <position position="1443"/>
    </location>
</feature>
<feature type="helix" evidence="32">
    <location>
        <begin position="31"/>
        <end position="58"/>
    </location>
</feature>
<feature type="helix" evidence="32">
    <location>
        <begin position="65"/>
        <end position="67"/>
    </location>
</feature>
<feature type="helix" evidence="32">
    <location>
        <begin position="70"/>
        <end position="72"/>
    </location>
</feature>
<feature type="helix" evidence="32">
    <location>
        <begin position="76"/>
        <end position="85"/>
    </location>
</feature>
<feature type="turn" evidence="32">
    <location>
        <begin position="87"/>
        <end position="89"/>
    </location>
</feature>
<feature type="helix" evidence="32">
    <location>
        <begin position="92"/>
        <end position="94"/>
    </location>
</feature>
<feature type="turn" evidence="32">
    <location>
        <begin position="96"/>
        <end position="99"/>
    </location>
</feature>
<feature type="helix" evidence="32">
    <location>
        <begin position="101"/>
        <end position="105"/>
    </location>
</feature>
<feature type="helix" evidence="32">
    <location>
        <begin position="110"/>
        <end position="112"/>
    </location>
</feature>
<feature type="helix" evidence="32">
    <location>
        <begin position="113"/>
        <end position="125"/>
    </location>
</feature>
<feature type="helix" evidence="32">
    <location>
        <begin position="130"/>
        <end position="132"/>
    </location>
</feature>
<feature type="helix" evidence="32">
    <location>
        <begin position="136"/>
        <end position="140"/>
    </location>
</feature>
<feature type="helix" evidence="32">
    <location>
        <begin position="145"/>
        <end position="161"/>
    </location>
</feature>
<feature type="turn" evidence="32">
    <location>
        <begin position="172"/>
        <end position="174"/>
    </location>
</feature>
<feature type="helix" evidence="32">
    <location>
        <begin position="179"/>
        <end position="190"/>
    </location>
</feature>
<feature type="helix" evidence="30">
    <location>
        <begin position="199"/>
        <end position="201"/>
    </location>
</feature>
<feature type="turn" evidence="30">
    <location>
        <begin position="206"/>
        <end position="208"/>
    </location>
</feature>
<feature type="helix" evidence="31">
    <location>
        <begin position="962"/>
        <end position="981"/>
    </location>
</feature>
<feature type="helix" evidence="31">
    <location>
        <begin position="984"/>
        <end position="991"/>
    </location>
</feature>
<feature type="helix" evidence="31">
    <location>
        <begin position="1000"/>
        <end position="1009"/>
    </location>
</feature>
<feature type="turn" evidence="31">
    <location>
        <begin position="1010"/>
        <end position="1013"/>
    </location>
</feature>
<feature type="helix" evidence="31">
    <location>
        <begin position="1016"/>
        <end position="1037"/>
    </location>
</feature>
<feature type="strand" evidence="31">
    <location>
        <begin position="1039"/>
        <end position="1042"/>
    </location>
</feature>
<feature type="helix" evidence="31">
    <location>
        <begin position="1043"/>
        <end position="1046"/>
    </location>
</feature>
<feature type="helix" evidence="31">
    <location>
        <begin position="1050"/>
        <end position="1058"/>
    </location>
</feature>
<feature type="helix" evidence="31">
    <location>
        <begin position="1062"/>
        <end position="1081"/>
    </location>
</feature>
<feature type="helix" evidence="31">
    <location>
        <begin position="1091"/>
        <end position="1106"/>
    </location>
</feature>
<feature type="helix" evidence="31">
    <location>
        <begin position="1118"/>
        <end position="1121"/>
    </location>
</feature>
<feature type="helix" evidence="31">
    <location>
        <begin position="1125"/>
        <end position="1150"/>
    </location>
</feature>
<feature type="helix" evidence="31">
    <location>
        <begin position="1151"/>
        <end position="1155"/>
    </location>
</feature>
<feature type="helix" evidence="31">
    <location>
        <begin position="1158"/>
        <end position="1174"/>
    </location>
</feature>
<feature type="helix" evidence="31">
    <location>
        <begin position="1180"/>
        <end position="1191"/>
    </location>
</feature>
<feature type="helix" evidence="31">
    <location>
        <begin position="1192"/>
        <end position="1196"/>
    </location>
</feature>
<feature type="helix" evidence="31">
    <location>
        <begin position="1197"/>
        <end position="1201"/>
    </location>
</feature>
<feature type="turn" evidence="31">
    <location>
        <begin position="1203"/>
        <end position="1207"/>
    </location>
</feature>
<feature type="helix" evidence="31">
    <location>
        <begin position="1219"/>
        <end position="1236"/>
    </location>
</feature>
<feature type="helix" evidence="31">
    <location>
        <begin position="1246"/>
        <end position="1248"/>
    </location>
</feature>
<feature type="helix" evidence="31">
    <location>
        <begin position="1249"/>
        <end position="1270"/>
    </location>
</feature>
<feature type="helix" evidence="31">
    <location>
        <begin position="1275"/>
        <end position="1278"/>
    </location>
</feature>
<feature type="strand" evidence="31">
    <location>
        <begin position="1282"/>
        <end position="1284"/>
    </location>
</feature>
<feature type="turn" evidence="31">
    <location>
        <begin position="1285"/>
        <end position="1287"/>
    </location>
</feature>
<feature type="strand" evidence="31">
    <location>
        <begin position="1290"/>
        <end position="1292"/>
    </location>
</feature>
<feature type="helix" evidence="31">
    <location>
        <begin position="1299"/>
        <end position="1311"/>
    </location>
</feature>
<feature type="helix" evidence="31">
    <location>
        <begin position="1313"/>
        <end position="1316"/>
    </location>
</feature>
<feature type="helix" evidence="31">
    <location>
        <begin position="1323"/>
        <end position="1331"/>
    </location>
</feature>
<feature type="strand" evidence="29">
    <location>
        <begin position="1561"/>
        <end position="1564"/>
    </location>
</feature>
<feature type="helix" evidence="29">
    <location>
        <begin position="1565"/>
        <end position="1571"/>
    </location>
</feature>
<feature type="strand" evidence="29">
    <location>
        <begin position="1572"/>
        <end position="1577"/>
    </location>
</feature>
<feature type="helix" evidence="29">
    <location>
        <begin position="1583"/>
        <end position="1587"/>
    </location>
</feature>
<feature type="strand" evidence="29">
    <location>
        <begin position="1589"/>
        <end position="1593"/>
    </location>
</feature>
<feature type="strand" evidence="29">
    <location>
        <begin position="1596"/>
        <end position="1599"/>
    </location>
</feature>
<feature type="strand" evidence="29">
    <location>
        <begin position="1601"/>
        <end position="1608"/>
    </location>
</feature>
<feature type="strand" evidence="29">
    <location>
        <begin position="1615"/>
        <end position="1617"/>
    </location>
</feature>
<feature type="helix" evidence="29">
    <location>
        <begin position="1619"/>
        <end position="1628"/>
    </location>
</feature>
<feature type="strand" evidence="29">
    <location>
        <begin position="1632"/>
        <end position="1635"/>
    </location>
</feature>
<feature type="turn" evidence="29">
    <location>
        <begin position="1636"/>
        <end position="1638"/>
    </location>
</feature>
<feature type="strand" evidence="29">
    <location>
        <begin position="1639"/>
        <end position="1642"/>
    </location>
</feature>
<feature type="helix" evidence="29">
    <location>
        <begin position="1643"/>
        <end position="1652"/>
    </location>
</feature>
<name>IQGA1_HUMAN</name>
<sequence>MSAADEVDGLGVARPHYGSVLDNERLTAEEMDERRRQNVAYEYLCHLEEAKRWMEACLGEDLPPTTELEEGLRNGVYLAKLGNFFSPKVVSLKKIYDREQTRYKATGLHFRHTDNVIQWLNAMDEIGLPKIFYPETTDIYDRKNMPRCIYCIHALSLYLFKLGLAPQIQDLYGKVDFTEEEINNMKTELEKYGIQMPAFSKIGGILANELSVDEAALHAAVIAINEAIDRRIPADTFAALKNPNAMLVNLEEPLASTYQDILYQAKQDKMTNAKNRTENSERERDVYEELLTQAEIQGNINKVNTFSALANIDLALEQGDALALFRALQSPALGLRGLQQQNSDWYLKQLLSDKQQKRQSGQTDPLQKEELQSGVDAANSAAQQYQRRLAAVALINAAIQKGVAEKTVLELMNPEAQLPQVYPFAADLYQKELATLQRQSPEHNLTHPELSVAVEMLSSVALINRALESGDVNTVWKQLSSSVTGLTNIEEENCQRYLDELMKLKAQAHAENNEFITWNDIQACVDHVNLVVQEEHERILAIGLINEALDEGDAQKTLQALQIPAAKLEGVLAEVAQHYQDTLIRAKREKAQEIQDESAVLWLDEIQGGIWQSNKDTQEAQKFALGIFAINEAVESGDVGKTLSALRSPDVGLYGVIPECGETYHSDLAEAKKKKLAVGDNNSKWVKHWVKGGYYYYHNLETQEGGWDEPPNFVQNSMQLSREEIQSSISGVTAAYNREQLWLANEGLITRLQARCRGYLVRQEFRSRMNFLKKQIPAITCIQSQWRGYKQKKAYQDRLAYLRSHKDEVVKIQSLARMHQARKRYRDRLQYFRDHINDIIKIQAFIRANKARDDYKTLINAEDPPMVVVRKFVHLLDQSDQDFQEELDLMKMREEVITLIRSNQQLENDLNLMDIKIGLLVKNKITLQDVVSHSKKLTKKNKEQLSDMMMINKQKGGLKALSKEKREKLEAYQHLFYLLQTNPTYLAKLIFQMPQNKSTKFMDSVIFTLYNYASNQREEYLLLRLFKTALQEEIKSKVDQIQEIVTGNPTVIKMVVSFNRGARGQNALRQILAPVVKEIMDDKSLNIKTDPVDIYKSWVNQMESQTGEASKLPYDVTPEQALAHEEVKTRLDSSIRNMRAVTDKFLSAIVSSVDKIPYGMRFIAKVLKDSLHEKFPDAGEDELLKIIGNLLYYRYMNPAIVAPDAFDIIDLSAGGQLTTDQRRNLGSIAKMLQHAASNKMFLGDNAHLSIINEYLSQSYQKFRRFFQTACDVPELQDKFNVDEYSDLVTLTKPVIYISIGEIINTHTLLLDHQDAIAPEHNDPIHELLDDLGEVPTIESLIGESSGNLNDPNKEALAKTEVSLTLTNKFDVPGDENAEMDARTILLNTKRLIVDVIRFQPGETLTEILETPATSEQEAEHQRAMQRRAIRDAKTPDKMKKSKSVKEDSNLTLQEKKEKIQTGLKKLTELGTVDPKNKYQELINDIARDIRNQRRYRQRRKAELVKLQQTYAALNSKATFYGEQVDYYKSYIKTCLDNLASKGKVSKKPREMKGKKSKKISLKYTAARLHEKGVLLEIEDLQVNQFKNVIFEISPTEEVGDFEVKAKFMGVQMETFMLHYQDLLQLQYEGVAVMKLFDRAKVNVNLLIFLLNKKFYGK</sequence>
<proteinExistence type="evidence at protein level"/>
<evidence type="ECO:0000250" key="1">
    <source>
        <dbReference type="UniProtKB" id="Q9JKF1"/>
    </source>
</evidence>
<evidence type="ECO:0000255" key="2">
    <source>
        <dbReference type="PROSITE-ProRule" id="PRU00044"/>
    </source>
</evidence>
<evidence type="ECO:0000255" key="3">
    <source>
        <dbReference type="PROSITE-ProRule" id="PRU00116"/>
    </source>
</evidence>
<evidence type="ECO:0000255" key="4">
    <source>
        <dbReference type="PROSITE-ProRule" id="PRU00167"/>
    </source>
</evidence>
<evidence type="ECO:0000255" key="5">
    <source>
        <dbReference type="PROSITE-ProRule" id="PRU00224"/>
    </source>
</evidence>
<evidence type="ECO:0000256" key="6">
    <source>
        <dbReference type="SAM" id="MobiDB-lite"/>
    </source>
</evidence>
<evidence type="ECO:0000269" key="7">
    <source>
    </source>
</evidence>
<evidence type="ECO:0000269" key="8">
    <source>
    </source>
</evidence>
<evidence type="ECO:0000269" key="9">
    <source>
    </source>
</evidence>
<evidence type="ECO:0000269" key="10">
    <source>
    </source>
</evidence>
<evidence type="ECO:0000269" key="11">
    <source>
    </source>
</evidence>
<evidence type="ECO:0000269" key="12">
    <source>
    </source>
</evidence>
<evidence type="ECO:0000269" key="13">
    <source>
    </source>
</evidence>
<evidence type="ECO:0000269" key="14">
    <source>
    </source>
</evidence>
<evidence type="ECO:0000269" key="15">
    <source>
    </source>
</evidence>
<evidence type="ECO:0000269" key="16">
    <source>
    </source>
</evidence>
<evidence type="ECO:0000269" key="17">
    <source>
    </source>
</evidence>
<evidence type="ECO:0000269" key="18">
    <source>
    </source>
</evidence>
<evidence type="ECO:0000269" key="19">
    <source ref="5"/>
</evidence>
<evidence type="ECO:0000305" key="20"/>
<evidence type="ECO:0000305" key="21">
    <source>
    </source>
</evidence>
<evidence type="ECO:0007744" key="22">
    <source>
    </source>
</evidence>
<evidence type="ECO:0007744" key="23">
    <source>
    </source>
</evidence>
<evidence type="ECO:0007744" key="24">
    <source>
    </source>
</evidence>
<evidence type="ECO:0007744" key="25">
    <source>
    </source>
</evidence>
<evidence type="ECO:0007744" key="26">
    <source>
    </source>
</evidence>
<evidence type="ECO:0007744" key="27">
    <source>
    </source>
</evidence>
<evidence type="ECO:0007744" key="28">
    <source>
    </source>
</evidence>
<evidence type="ECO:0007829" key="29">
    <source>
        <dbReference type="PDB" id="1X0H"/>
    </source>
</evidence>
<evidence type="ECO:0007829" key="30">
    <source>
        <dbReference type="PDB" id="2RR8"/>
    </source>
</evidence>
<evidence type="ECO:0007829" key="31">
    <source>
        <dbReference type="PDB" id="3FAY"/>
    </source>
</evidence>
<evidence type="ECO:0007829" key="32">
    <source>
        <dbReference type="PDB" id="5L0O"/>
    </source>
</evidence>
<accession>P46940</accession>
<accession>A7MBM3</accession>
<reference key="1">
    <citation type="journal article" date="1994" name="J. Biol. Chem.">
        <title>Identification of a human rasGAP-related protein containing calmodulin-binding motifs.</title>
        <authorList>
            <person name="Weissbach L."/>
            <person name="Settleman J."/>
            <person name="Kalady M.F."/>
            <person name="Snijders A.J."/>
            <person name="Murthy A.E."/>
            <person name="Yan Y.-X."/>
            <person name="Bernards A."/>
        </authorList>
    </citation>
    <scope>NUCLEOTIDE SEQUENCE [MRNA]</scope>
    <scope>TISSUE SPECIFICITY</scope>
    <source>
        <tissue>Liver</tissue>
        <tissue>Placenta</tissue>
    </source>
</reference>
<reference key="2">
    <citation type="journal article" date="1994" name="DNA Res.">
        <title>Prediction of the coding sequences of unidentified human genes. II. The coding sequences of 40 new genes (KIAA0041-KIAA0080) deduced by analysis of cDNA clones from human cell line KG-1.</title>
        <authorList>
            <person name="Nomura N."/>
            <person name="Nagase T."/>
            <person name="Miyajima N."/>
            <person name="Sazuka T."/>
            <person name="Tanaka A."/>
            <person name="Sato S."/>
            <person name="Seki N."/>
            <person name="Kawarabayasi Y."/>
            <person name="Ishikawa K."/>
            <person name="Tabata S."/>
        </authorList>
    </citation>
    <scope>NUCLEOTIDE SEQUENCE [LARGE SCALE MRNA]</scope>
    <source>
        <tissue>Bone marrow</tissue>
    </source>
</reference>
<reference key="3">
    <citation type="submission" date="2005-07" db="EMBL/GenBank/DDBJ databases">
        <authorList>
            <person name="Mural R.J."/>
            <person name="Istrail S."/>
            <person name="Sutton G.G."/>
            <person name="Florea L."/>
            <person name="Halpern A.L."/>
            <person name="Mobarry C.M."/>
            <person name="Lippert R."/>
            <person name="Walenz B."/>
            <person name="Shatkay H."/>
            <person name="Dew I."/>
            <person name="Miller J.R."/>
            <person name="Flanigan M.J."/>
            <person name="Edwards N.J."/>
            <person name="Bolanos R."/>
            <person name="Fasulo D."/>
            <person name="Halldorsson B.V."/>
            <person name="Hannenhalli S."/>
            <person name="Turner R."/>
            <person name="Yooseph S."/>
            <person name="Lu F."/>
            <person name="Nusskern D.R."/>
            <person name="Shue B.C."/>
            <person name="Zheng X.H."/>
            <person name="Zhong F."/>
            <person name="Delcher A.L."/>
            <person name="Huson D.H."/>
            <person name="Kravitz S.A."/>
            <person name="Mouchard L."/>
            <person name="Reinert K."/>
            <person name="Remington K.A."/>
            <person name="Clark A.G."/>
            <person name="Waterman M.S."/>
            <person name="Eichler E.E."/>
            <person name="Adams M.D."/>
            <person name="Hunkapiller M.W."/>
            <person name="Myers E.W."/>
            <person name="Venter J.C."/>
        </authorList>
    </citation>
    <scope>NUCLEOTIDE SEQUENCE [LARGE SCALE GENOMIC DNA]</scope>
</reference>
<reference key="4">
    <citation type="journal article" date="2004" name="Genome Res.">
        <title>The status, quality, and expansion of the NIH full-length cDNA project: the Mammalian Gene Collection (MGC).</title>
        <authorList>
            <consortium name="The MGC Project Team"/>
        </authorList>
    </citation>
    <scope>NUCLEOTIDE SEQUENCE [LARGE SCALE MRNA]</scope>
</reference>
<reference key="5">
    <citation type="submission" date="2009-03" db="UniProtKB">
        <authorList>
            <person name="Bienvenut W.V."/>
            <person name="Lilla S."/>
            <person name="Zebisch A."/>
            <person name="Kolch W."/>
        </authorList>
    </citation>
    <scope>PROTEIN SEQUENCE OF 2-25; 81-88; 112-143; 192-230; 466-477; 557-585; 923-935; 989-997; 1391-1397; 1466-1475 AND 1506-1516</scope>
    <scope>CLEAVAGE OF INITIATOR METHIONINE</scope>
    <scope>ACETYLATION AT SER-2</scope>
    <scope>IDENTIFICATION BY MASS SPECTROMETRY</scope>
    <source>
        <tissue>Colon carcinoma</tissue>
    </source>
</reference>
<reference key="6">
    <citation type="journal article" date="2004" name="J. Biol. Chem.">
        <title>Phosphorylation of IQGAP1 modulates its binding to Cdc42, revealing a new type of rho-GTPase regulator.</title>
        <authorList>
            <person name="Grohmanova K."/>
            <person name="Schlaepfer D."/>
            <person name="Hess D."/>
            <person name="Gutierrez P."/>
            <person name="Beck M."/>
            <person name="Kroschewski R."/>
        </authorList>
    </citation>
    <scope>PROTEIN SEQUENCE OF 1441-1455</scope>
    <scope>PHOSPHORYLATION AT SER-1443</scope>
    <scope>INTERACTION WITH CDC42 AND RAC1</scope>
    <scope>DOMAIN</scope>
    <scope>SUBCELLULAR LOCATION</scope>
    <scope>IDENTIFICATION BY MASS SPECTROMETRY</scope>
</reference>
<reference key="7">
    <citation type="journal article" date="2005" name="J. Biol. Chem.">
        <title>IQGAP1 promotes neurite outgrowth in a phosphorylation-dependent manner.</title>
        <authorList>
            <person name="Li Z."/>
            <person name="McNulty D.E."/>
            <person name="Marler K.J.M."/>
            <person name="Lim L."/>
            <person name="Hall C."/>
            <person name="Annan R.S."/>
            <person name="Sacks D.B."/>
        </authorList>
    </citation>
    <scope>PROTEIN SEQUENCE OF 1441-1455</scope>
    <scope>PHOSPHORYLATION AT SER-1441 AND SER-1443</scope>
    <scope>MUTAGENESIS OF SER-1441 AND SER-1443</scope>
    <scope>FUNCTION</scope>
    <scope>IDENTIFICATION BY MASS SPECTROMETRY</scope>
</reference>
<reference key="8">
    <citation type="journal article" date="1996" name="EMBO J.">
        <title>IQGAP1, a calmodulin-binding protein with a rasGAP-related domain, is a potential effector for cdc42Hs.</title>
        <authorList>
            <person name="Hart M.J."/>
            <person name="Callow M.G."/>
            <person name="Souza B."/>
            <person name="Polakis P."/>
        </authorList>
    </citation>
    <scope>CHARACTERIZATION</scope>
</reference>
<reference key="9">
    <citation type="journal article" date="2006" name="Cell">
        <title>Global, in vivo, and site-specific phosphorylation dynamics in signaling networks.</title>
        <authorList>
            <person name="Olsen J.V."/>
            <person name="Blagoev B."/>
            <person name="Gnad F."/>
            <person name="Macek B."/>
            <person name="Kumar C."/>
            <person name="Mortensen P."/>
            <person name="Mann M."/>
        </authorList>
    </citation>
    <scope>PHOSPHORYLATION [LARGE SCALE ANALYSIS] AT SER-2</scope>
    <scope>IDENTIFICATION BY MASS SPECTROMETRY [LARGE SCALE ANALYSIS]</scope>
    <source>
        <tissue>Cervix carcinoma</tissue>
    </source>
</reference>
<reference key="10">
    <citation type="journal article" date="2007" name="EMBO J.">
        <title>Human ESCRT and ALIX proteins interact with proteins of the midbody and function in cytokinesis.</title>
        <authorList>
            <person name="Morita E."/>
            <person name="Sandrin V."/>
            <person name="Chung H.Y."/>
            <person name="Morham S.G."/>
            <person name="Gygi S.P."/>
            <person name="Rodesch C.K."/>
            <person name="Sundquist W.I."/>
        </authorList>
    </citation>
    <scope>INTERACTION WITH TSG101</scope>
</reference>
<reference key="11">
    <citation type="journal article" date="2008" name="Proc. Natl. Acad. Sci. U.S.A.">
        <title>A quantitative atlas of mitotic phosphorylation.</title>
        <authorList>
            <person name="Dephoure N."/>
            <person name="Zhou C."/>
            <person name="Villen J."/>
            <person name="Beausoleil S.A."/>
            <person name="Bakalarski C.E."/>
            <person name="Elledge S.J."/>
            <person name="Gygi S.P."/>
        </authorList>
    </citation>
    <scope>PHOSPHORYLATION [LARGE SCALE ANALYSIS] AT SER-1443</scope>
    <scope>IDENTIFICATION BY MASS SPECTROMETRY [LARGE SCALE ANALYSIS]</scope>
    <source>
        <tissue>Cervix carcinoma</tissue>
    </source>
</reference>
<reference key="12">
    <citation type="journal article" date="2008" name="Prostate">
        <title>Increased PAK6 expression in prostate cancer and identification of PAK6 associated proteins.</title>
        <authorList>
            <person name="Kaur R."/>
            <person name="Yuan X."/>
            <person name="Lu M.L."/>
            <person name="Balk S.P."/>
        </authorList>
    </citation>
    <scope>INTERACTION WITH PAK6</scope>
</reference>
<reference key="13">
    <citation type="journal article" date="2010" name="Sci. Signal.">
        <title>Quantitative phosphoproteomics reveals widespread full phosphorylation site occupancy during mitosis.</title>
        <authorList>
            <person name="Olsen J.V."/>
            <person name="Vermeulen M."/>
            <person name="Santamaria A."/>
            <person name="Kumar C."/>
            <person name="Miller M.L."/>
            <person name="Jensen L.J."/>
            <person name="Gnad F."/>
            <person name="Cox J."/>
            <person name="Jensen T.S."/>
            <person name="Nigg E.A."/>
            <person name="Brunak S."/>
            <person name="Mann M."/>
        </authorList>
    </citation>
    <scope>ACETYLATION [LARGE SCALE ANALYSIS] AT SER-2</scope>
    <scope>PHOSPHORYLATION [LARGE SCALE ANALYSIS] AT SER-2; SER-330 AND SER-1443</scope>
    <scope>CLEAVAGE OF INITIATOR METHIONINE [LARGE SCALE ANALYSIS]</scope>
    <scope>IDENTIFICATION BY MASS SPECTROMETRY [LARGE SCALE ANALYSIS]</scope>
    <source>
        <tissue>Cervix carcinoma</tissue>
    </source>
</reference>
<reference key="14">
    <citation type="journal article" date="2011" name="BMC Syst. Biol.">
        <title>Initial characterization of the human central proteome.</title>
        <authorList>
            <person name="Burkard T.R."/>
            <person name="Planyavsky M."/>
            <person name="Kaupe I."/>
            <person name="Breitwieser F.P."/>
            <person name="Buerckstuemmer T."/>
            <person name="Bennett K.L."/>
            <person name="Superti-Furga G."/>
            <person name="Colinge J."/>
        </authorList>
    </citation>
    <scope>IDENTIFICATION BY MASS SPECTROMETRY [LARGE SCALE ANALYSIS]</scope>
</reference>
<reference key="15">
    <citation type="journal article" date="2011" name="Int. J. Biochem. Cell Biol.">
        <title>IQGAP1 translocates to the nucleus in early S-phase and contributes to cell cycle progression after DNA replication arrest.</title>
        <authorList>
            <person name="Johnson M."/>
            <person name="Sharma M."/>
            <person name="Brocardo M.G."/>
            <person name="Henderson B.R."/>
        </authorList>
    </citation>
    <scope>SUBCELLULAR LOCATION</scope>
    <scope>FUNCTION</scope>
</reference>
<reference key="16">
    <citation type="journal article" date="2012" name="Mol. Cell. Proteomics">
        <title>Comparative large-scale characterisation of plant vs. mammal proteins reveals similar and idiosyncratic N-alpha acetylation features.</title>
        <authorList>
            <person name="Bienvenut W.V."/>
            <person name="Sumpton D."/>
            <person name="Martinez A."/>
            <person name="Lilla S."/>
            <person name="Espagne C."/>
            <person name="Meinnel T."/>
            <person name="Giglione C."/>
        </authorList>
    </citation>
    <scope>ACETYLATION [LARGE SCALE ANALYSIS] AT SER-2</scope>
    <scope>CLEAVAGE OF INITIATOR METHIONINE [LARGE SCALE ANALYSIS]</scope>
    <scope>IDENTIFICATION BY MASS SPECTROMETRY [LARGE SCALE ANALYSIS]</scope>
</reference>
<reference key="17">
    <citation type="journal article" date="2012" name="Proc. Natl. Acad. Sci. U.S.A.">
        <title>N-terminal acetylome analyses and functional insights of the N-terminal acetyltransferase NatB.</title>
        <authorList>
            <person name="Van Damme P."/>
            <person name="Lasa M."/>
            <person name="Polevoda B."/>
            <person name="Gazquez C."/>
            <person name="Elosegui-Artola A."/>
            <person name="Kim D.S."/>
            <person name="De Juan-Pardo E."/>
            <person name="Demeyer K."/>
            <person name="Hole K."/>
            <person name="Larrea E."/>
            <person name="Timmerman E."/>
            <person name="Prieto J."/>
            <person name="Arnesen T."/>
            <person name="Sherman F."/>
            <person name="Gevaert K."/>
            <person name="Aldabe R."/>
        </authorList>
    </citation>
    <scope>ACETYLATION [LARGE SCALE ANALYSIS] AT SER-2</scope>
    <scope>CLEAVAGE OF INITIATOR METHIONINE [LARGE SCALE ANALYSIS]</scope>
    <scope>IDENTIFICATION BY MASS SPECTROMETRY [LARGE SCALE ANALYSIS]</scope>
</reference>
<reference key="18">
    <citation type="journal article" date="2013" name="Cell. Signal.">
        <title>SASH1 regulates melanocyte transepithelial migration through a novel Galphas-SASH1-IQGAP1-E-cadherin dependent pathway.</title>
        <authorList>
            <person name="Zhou D."/>
            <person name="Wei Z."/>
            <person name="Deng S."/>
            <person name="Wang T."/>
            <person name="Zai M."/>
            <person name="Wang H."/>
            <person name="Guo L."/>
            <person name="Zhang J."/>
            <person name="Zhong H."/>
            <person name="He L."/>
            <person name="Xing Q."/>
        </authorList>
    </citation>
    <scope>INTERACTION WITH SASH1</scope>
</reference>
<reference key="19">
    <citation type="journal article" date="2013" name="J. Proteome Res.">
        <title>Toward a comprehensive characterization of a human cancer cell phosphoproteome.</title>
        <authorList>
            <person name="Zhou H."/>
            <person name="Di Palma S."/>
            <person name="Preisinger C."/>
            <person name="Peng M."/>
            <person name="Polat A.N."/>
            <person name="Heck A.J."/>
            <person name="Mohammed S."/>
        </authorList>
    </citation>
    <scope>PHOSPHORYLATION [LARGE SCALE ANALYSIS] AT SER-2; SER-330 AND SER-1443</scope>
    <scope>IDENTIFICATION BY MASS SPECTROMETRY [LARGE SCALE ANALYSIS]</scope>
    <source>
        <tissue>Cervix carcinoma</tissue>
        <tissue>Erythroleukemia</tissue>
    </source>
</reference>
<reference key="20">
    <citation type="journal article" date="2013" name="J. Virol.">
        <title>Host IQGAP1 and Ebola virus VP40 interactions facilitate virus-like particle egress.</title>
        <authorList>
            <person name="Lu J."/>
            <person name="Qu Y."/>
            <person name="Liu Y."/>
            <person name="Jambusaria R."/>
            <person name="Han Z."/>
            <person name="Ruthel G."/>
            <person name="Freedman B.D."/>
            <person name="Harty R.N."/>
        </authorList>
    </citation>
    <scope>INTERACTION WITH EBOLAVIRUS VP40 (MICROBIAL INFECTION)</scope>
</reference>
<reference key="21">
    <citation type="journal article" date="2014" name="J. Proteomics">
        <title>An enzyme assisted RP-RPLC approach for in-depth analysis of human liver phosphoproteome.</title>
        <authorList>
            <person name="Bian Y."/>
            <person name="Song C."/>
            <person name="Cheng K."/>
            <person name="Dong M."/>
            <person name="Wang F."/>
            <person name="Huang J."/>
            <person name="Sun D."/>
            <person name="Wang L."/>
            <person name="Ye M."/>
            <person name="Zou H."/>
        </authorList>
    </citation>
    <scope>IDENTIFICATION BY MASS SPECTROMETRY [LARGE SCALE ANALYSIS]</scope>
    <source>
        <tissue>Liver</tissue>
    </source>
</reference>
<reference key="22">
    <citation type="journal article" date="2015" name="Proteomics">
        <title>N-terminome analysis of the human mitochondrial proteome.</title>
        <authorList>
            <person name="Vaca Jacome A.S."/>
            <person name="Rabilloud T."/>
            <person name="Schaeffer-Reiss C."/>
            <person name="Rompais M."/>
            <person name="Ayoub D."/>
            <person name="Lane L."/>
            <person name="Bairoch A."/>
            <person name="Van Dorsselaer A."/>
            <person name="Carapito C."/>
        </authorList>
    </citation>
    <scope>ACETYLATION [LARGE SCALE ANALYSIS] AT SER-2</scope>
    <scope>CLEAVAGE OF INITIATOR METHIONINE [LARGE SCALE ANALYSIS]</scope>
    <scope>IDENTIFICATION BY MASS SPECTROMETRY [LARGE SCALE ANALYSIS]</scope>
</reference>
<reference key="23">
    <citation type="journal article" date="2017" name="Cell Stem Cell">
        <title>The primate-specific gene TMEM14B marks outer radial glia cells and promotes cortical expansion and folding.</title>
        <authorList>
            <person name="Liu J."/>
            <person name="Liu W."/>
            <person name="Yang L."/>
            <person name="Wu Q."/>
            <person name="Zhang H."/>
            <person name="Fang A."/>
            <person name="Li L."/>
            <person name="Xu X."/>
            <person name="Sun L."/>
            <person name="Zhang J."/>
            <person name="Tang F."/>
            <person name="Wang X."/>
        </authorList>
    </citation>
    <scope>INTERACTION WITH TMEM14B</scope>
    <scope>SUBCELLULAR LOCATION</scope>
    <scope>DEVELOPMENTAL STAGE</scope>
</reference>
<reference key="24">
    <citation type="journal article" date="2020" name="Virology">
        <title>Characterization of pUL5, an HCMV protein interacting with the cellular protein IQGAP1.</title>
        <authorList>
            <person name="Anselmi G."/>
            <person name="Giuliani M."/>
            <person name="Vezzani G."/>
            <person name="Ferranti R."/>
            <person name="Gentile M."/>
            <person name="Cortese M."/>
            <person name="Amendola D."/>
            <person name="Pacchiani N."/>
            <person name="D'Aurizio R."/>
            <person name="Bruno L."/>
            <person name="Uematsu Y."/>
            <person name="Merola M."/>
            <person name="Maione D."/>
        </authorList>
    </citation>
    <scope>INTERACTION WITH HUMAN CYTOMEGALOVIRUS PROTEIN UL5 (MICROBIAL INFECTION)</scope>
</reference>
<reference key="25">
    <citation type="journal article" date="2021" name="Nat. Commun.">
        <title>The Campylobacter jejuni CiaD effector co-opts the host cell protein IQGAP1 to promote cell entry.</title>
        <authorList>
            <person name="Negretti N.M."/>
            <person name="Gourley C.R."/>
            <person name="Talukdar P.K."/>
            <person name="Clair G."/>
            <person name="Klappenbach C.M."/>
            <person name="Lauritsen C.J."/>
            <person name="Adkins J.N."/>
            <person name="Konkel M.E."/>
        </authorList>
    </citation>
    <scope>INTERACTION WITH C.JEJUNI CIAD (MICROBIAL INFECTION)</scope>
</reference>
<reference key="26">
    <citation type="journal article" date="2022" name="Front. Mol. Biosci.">
        <title>Identification of IQGAP1 as a SLC26A4 (Pendrin)-Binding Protein in the Kidney.</title>
        <authorList>
            <person name="Xu J."/>
            <person name="Barone S."/>
            <person name="Varasteh Kia M."/>
            <person name="Holliday L.S."/>
            <person name="Zahedi K."/>
            <person name="Soleimani M."/>
        </authorList>
    </citation>
    <scope>INTERACTION WITH SLC26A4</scope>
    <scope>SUBCELLULAR LOCATION</scope>
</reference>
<reference key="27">
    <citation type="submission" date="2005-09" db="PDB data bank">
        <title>Solution structure of the carboxyl-terminal RGC domain in human IQGAP1.</title>
        <authorList>
            <consortium name="RIKEN structural genomics initiative (RSGI)"/>
        </authorList>
    </citation>
    <scope>STRUCTURE BY NMR OF 1559-1657</scope>
</reference>
<keyword id="KW-0002">3D-structure</keyword>
<keyword id="KW-0007">Acetylation</keyword>
<keyword id="KW-0112">Calmodulin-binding</keyword>
<keyword id="KW-1003">Cell membrane</keyword>
<keyword id="KW-0963">Cytoplasm</keyword>
<keyword id="KW-0903">Direct protein sequencing</keyword>
<keyword id="KW-0945">Host-virus interaction</keyword>
<keyword id="KW-0472">Membrane</keyword>
<keyword id="KW-0539">Nucleus</keyword>
<keyword id="KW-0597">Phosphoprotein</keyword>
<keyword id="KW-1267">Proteomics identification</keyword>
<keyword id="KW-1185">Reference proteome</keyword>
<keyword id="KW-0677">Repeat</keyword>
<comment type="function">
    <text evidence="1 8 11">Plays a crucial role in regulating the dynamics and assembly of the actin cytoskeleton. Recruited to the cell cortex by interaction with ILK which allows it to cooperate with its effector DIAPH1 to locally stabilize microtubules and allow stable insertion of caveolae into the plasma membrane (By similarity). Binds to activated CDC42 but does not stimulate its GTPase activity. Associates with calmodulin. May promote neurite outgrowth (PubMed:15695813). May play a possible role in cell cycle regulation by contributing to cell cycle progression after DNA replication arrest (PubMed:20883816).</text>
</comment>
<comment type="subunit">
    <text evidence="1 7 9 10 12 14 17">Interacts with CDC42; the interaction is demonstrated with IQGAP1 in GTP-bound and in nucleotide-free state (PubMed:15355962). Interacts with RAC1 (PubMed:15355962). Does not interact with RHOA. Interacts with TSG101 (PubMed:17853893). Interacts with PAK6 (PubMed:18642328). Interacts with TMEM14B; this interaction increases IQGAP1 phosphorylation and induces its nuclear translocation (PubMed:29033352). Interacts with SASH1 (PubMed:23333244). Interacts with PJVK (By similarity). Interacts with SLC26A4; this interaction enhances the chloride-bicarbonate exchange activity of SLC26A4 (PubMed:35601831). Interacts with SVEP1 (By similarity). Interacts with ILK; the interaction is required for localization of IQGAP to the cell cortex (By similarity).</text>
</comment>
<comment type="subunit">
    <text evidence="13">(Microbial infection) Interacts with ebolavirus vp40.</text>
</comment>
<comment type="subunit">
    <text evidence="15">(Microbial infection) Interacts with human cytomegalovirus protein UL5.</text>
</comment>
<comment type="subunit">
    <text evidence="16">(Microbial infection) Interacts with C.jejuni invasion antigen D (CiaD).</text>
</comment>
<comment type="interaction">
    <interactant intactId="EBI-297509">
        <id>P46940</id>
    </interactant>
    <interactant intactId="EBI-351526">
        <id>O43707</id>
        <label>ACTN4</label>
    </interactant>
    <organismsDiffer>false</organismsDiffer>
    <experiments>4</experiments>
</comment>
<comment type="interaction">
    <interactant intactId="EBI-297509">
        <id>P46940</id>
    </interactant>
    <interactant intactId="EBI-447171">
        <id>P84077</id>
        <label>ARF1</label>
    </interactant>
    <organismsDiffer>false</organismsDiffer>
    <experiments>4</experiments>
</comment>
<comment type="interaction">
    <interactant intactId="EBI-297509">
        <id>P46940</id>
    </interactant>
    <interactant intactId="EBI-702093">
        <id>P56945</id>
        <label>BCAR1</label>
    </interactant>
    <organismsDiffer>false</organismsDiffer>
    <experiments>4</experiments>
</comment>
<comment type="interaction">
    <interactant intactId="EBI-297509">
        <id>P46940</id>
    </interactant>
    <interactant intactId="EBI-365980">
        <id>P15056</id>
        <label>BRAF</label>
    </interactant>
    <organismsDiffer>false</organismsDiffer>
    <experiments>4</experiments>
</comment>
<comment type="interaction">
    <interactant intactId="EBI-297509">
        <id>P46940</id>
    </interactant>
    <interactant intactId="EBI-298152">
        <id>Q9Y5K6</id>
        <label>CD2AP</label>
    </interactant>
    <organismsDiffer>false</organismsDiffer>
    <experiments>4</experiments>
</comment>
<comment type="interaction">
    <interactant intactId="EBI-297509">
        <id>P46940</id>
    </interactant>
    <interactant intactId="EBI-81752">
        <id>P60953</id>
        <label>CDC42</label>
    </interactant>
    <organismsDiffer>false</organismsDiffer>
    <experiments>12</experiments>
</comment>
<comment type="interaction">
    <interactant intactId="EBI-297509">
        <id>P46940</id>
    </interactant>
    <interactant intactId="EBI-491549">
        <id>P35222</id>
        <label>CTNNB1</label>
    </interactant>
    <organismsDiffer>false</organismsDiffer>
    <experiments>3</experiments>
</comment>
<comment type="interaction">
    <interactant intactId="EBI-297509">
        <id>P46940</id>
    </interactant>
    <interactant intactId="EBI-2835281">
        <id>P25025</id>
        <label>CXCR2</label>
    </interactant>
    <organismsDiffer>false</organismsDiffer>
    <experiments>12</experiments>
</comment>
<comment type="interaction">
    <interactant intactId="EBI-297509">
        <id>P46940</id>
    </interactant>
    <interactant intactId="EBI-297353">
        <id>P00533</id>
        <label>EGFR</label>
    </interactant>
    <organismsDiffer>false</organismsDiffer>
    <experiments>4</experiments>
</comment>
<comment type="interaction">
    <interactant intactId="EBI-297509">
        <id>P46940</id>
    </interactant>
    <interactant intactId="EBI-641062">
        <id>P04626</id>
        <label>ERBB2</label>
    </interactant>
    <organismsDiffer>false</organismsDiffer>
    <experiments>5</experiments>
</comment>
<comment type="interaction">
    <interactant intactId="EBI-297509">
        <id>P46940</id>
    </interactant>
    <interactant intactId="EBI-357925">
        <id>Q12905</id>
        <label>ILF2</label>
    </interactant>
    <organismsDiffer>false</organismsDiffer>
    <experiments>3</experiments>
</comment>
<comment type="interaction">
    <interactant intactId="EBI-297509">
        <id>P46940</id>
    </interactant>
    <interactant intactId="EBI-20141748">
        <id>P52954</id>
        <label>LBX1</label>
    </interactant>
    <organismsDiffer>false</organismsDiffer>
    <experiments>3</experiments>
</comment>
<comment type="interaction">
    <interactant intactId="EBI-297509">
        <id>P46940</id>
    </interactant>
    <interactant intactId="EBI-924464">
        <id>Q96QZ7</id>
        <label>MAGI1</label>
    </interactant>
    <organismsDiffer>false</organismsDiffer>
    <experiments>4</experiments>
</comment>
<comment type="interaction">
    <interactant intactId="EBI-297509">
        <id>P46940</id>
    </interactant>
    <interactant intactId="EBI-19944212">
        <id>A8MW99</id>
        <label>MEI4</label>
    </interactant>
    <organismsDiffer>false</organismsDiffer>
    <experiments>3</experiments>
</comment>
<comment type="interaction">
    <interactant intactId="EBI-297509">
        <id>P46940</id>
    </interactant>
    <interactant intactId="EBI-16439278">
        <id>Q6FHY5</id>
        <label>MEOX2</label>
    </interactant>
    <organismsDiffer>false</organismsDiffer>
    <experiments>3</experiments>
</comment>
<comment type="interaction">
    <interactant intactId="EBI-297509">
        <id>P46940</id>
    </interactant>
    <interactant intactId="EBI-996920">
        <id>O60500</id>
        <label>NPHS1</label>
    </interactant>
    <organismsDiffer>false</organismsDiffer>
    <experiments>5</experiments>
</comment>
<comment type="interaction">
    <interactant intactId="EBI-297509">
        <id>P46940</id>
    </interactant>
    <interactant intactId="EBI-6897706">
        <id>Q9NP85</id>
        <label>NPHS2</label>
    </interactant>
    <organismsDiffer>false</organismsDiffer>
    <experiments>4</experiments>
</comment>
<comment type="interaction">
    <interactant intactId="EBI-297509">
        <id>P46940</id>
    </interactant>
    <interactant intactId="EBI-9087860">
        <id>P32243-2</id>
        <label>OTX2</label>
    </interactant>
    <organismsDiffer>false</organismsDiffer>
    <experiments>3</experiments>
</comment>
<comment type="interaction">
    <interactant intactId="EBI-297509">
        <id>P46940</id>
    </interactant>
    <interactant intactId="EBI-8838062">
        <id>O60331-4</id>
        <label>PIP5K1C</label>
    </interactant>
    <organismsDiffer>false</organismsDiffer>
    <experiments>7</experiments>
</comment>
<comment type="interaction">
    <interactant intactId="EBI-297509">
        <id>P46940</id>
    </interactant>
    <interactant intactId="EBI-2692890">
        <id>Q96KN3</id>
        <label>PKNOX2</label>
    </interactant>
    <organismsDiffer>false</organismsDiffer>
    <experiments>3</experiments>
</comment>
<comment type="interaction">
    <interactant intactId="EBI-297509">
        <id>P46940</id>
    </interactant>
    <interactant intactId="EBI-6897823">
        <id>O00592</id>
        <label>PODXL</label>
    </interactant>
    <organismsDiffer>false</organismsDiffer>
    <experiments>4</experiments>
</comment>
<comment type="interaction">
    <interactant intactId="EBI-297509">
        <id>P46940</id>
    </interactant>
    <interactant intactId="EBI-413628">
        <id>P63000</id>
        <label>RAC1</label>
    </interactant>
    <organismsDiffer>false</organismsDiffer>
    <experiments>11</experiments>
</comment>
<comment type="interaction">
    <interactant intactId="EBI-297509">
        <id>P46940</id>
    </interactant>
    <interactant intactId="EBI-8390477">
        <id>Q05823</id>
        <label>RNASEL</label>
    </interactant>
    <organismsDiffer>false</organismsDiffer>
    <experiments>2</experiments>
</comment>
<comment type="interaction">
    <interactant intactId="EBI-297509">
        <id>P46940</id>
    </interactant>
    <interactant intactId="EBI-11139477">
        <id>Q96N21</id>
        <label>TEPSIN</label>
    </interactant>
    <organismsDiffer>false</organismsDiffer>
    <experiments>3</experiments>
</comment>
<comment type="interaction">
    <interactant intactId="EBI-297509">
        <id>P46940</id>
    </interactant>
    <interactant intactId="EBI-346882">
        <id>Q99816</id>
        <label>TSG101</label>
    </interactant>
    <organismsDiffer>false</organismsDiffer>
    <experiments>5</experiments>
</comment>
<comment type="interaction">
    <interactant intactId="EBI-297509">
        <id>P46940</id>
    </interactant>
    <interactant intactId="EBI-1026445">
        <id>O08808</id>
        <label>Diaph1</label>
    </interactant>
    <organismsDiffer>true</organismsDiffer>
    <experiments>8</experiments>
</comment>
<comment type="subcellular location">
    <subcellularLocation>
        <location evidence="7 14">Cell membrane</location>
    </subcellularLocation>
    <subcellularLocation>
        <location evidence="11 14">Nucleus</location>
    </subcellularLocation>
    <subcellularLocation>
        <location evidence="11 14">Cytoplasm</location>
    </subcellularLocation>
    <subcellularLocation>
        <location evidence="1">Cytoplasm</location>
        <location evidence="1">Cell cortex</location>
    </subcellularLocation>
    <subcellularLocation>
        <location evidence="17">Apical cell membrane</location>
    </subcellularLocation>
    <subcellularLocation>
        <location evidence="1">Basolateral cell membrane</location>
    </subcellularLocation>
    <text evidence="11">Subcellular distribution is regulated by the cell cycle, nuclear levels increase at G1/S phase (PubMed:20883816).</text>
</comment>
<comment type="tissue specificity">
    <text evidence="18">Expressed in the placenta, lung, and kidney (PubMed:8051149). A lower level expression is seen in the heart, liver, skeletal muscle and pancreas (PubMed:8051149).</text>
</comment>
<comment type="developmental stage">
    <text evidence="14">Expressed widely in developing cortex.</text>
</comment>
<comment type="domain">
    <text evidence="7">Regions C1 and C2 can either interact with nucleotide-free CDC42, or interact together, depending on the phosphorylation state of Ser-1443. When Ser-1443 is not phosphorylated, C1 and C2 interact, which prevents binding of nucleotide-free CDC42 and promotes binding of GTP-bound CDC42. Phosphorylation of Ser-1443 prevents interaction between C1 and C2, which opens the structure of the C-terminus and allows binding and sequestration of nucleotide-free CDC42 on both C1 and C2.</text>
</comment>
<comment type="PTM">
    <text evidence="7 8">Phosphorylation of Ser-1443 by PKC/PRKCE prevents interaction between C1 and C2, allowing binding of nucleotide-free CDC42. Ser-1443 phosphorylation enhances the ability to promote neurite outgrowth.</text>
</comment>
<comment type="sequence caution" evidence="20">
    <conflict type="erroneous initiation">
        <sequence resource="EMBL-CDS" id="BAA06123"/>
    </conflict>
</comment>
<protein>
    <recommendedName>
        <fullName>Ras GTPase-activating-like protein IQGAP1</fullName>
    </recommendedName>
    <alternativeName>
        <fullName>p195</fullName>
    </alternativeName>
</protein>